<gene>
    <name type="primary">EZR</name>
    <name type="synonym">VIL2</name>
</gene>
<proteinExistence type="evidence at protein level"/>
<keyword id="KW-0007">Acetylation</keyword>
<keyword id="KW-1003">Cell membrane</keyword>
<keyword id="KW-0966">Cell projection</keyword>
<keyword id="KW-0133">Cell shape</keyword>
<keyword id="KW-0175">Coiled coil</keyword>
<keyword id="KW-0963">Cytoplasm</keyword>
<keyword id="KW-0206">Cytoskeleton</keyword>
<keyword id="KW-0903">Direct protein sequencing</keyword>
<keyword id="KW-0472">Membrane</keyword>
<keyword id="KW-0597">Phosphoprotein</keyword>
<keyword id="KW-1185">Reference proteome</keyword>
<keyword id="KW-0702">S-nitrosylation</keyword>
<comment type="function">
    <text evidence="1">Probably involved in connections of major cytoskeletal structures to the plasma membrane. In epithelial cells, required for the formation of microvilli and membrane ruffles on the apical pole. Along with PLEKHG6, required for normal macropinocytosis (By similarity).</text>
</comment>
<comment type="activity regulation">
    <text evidence="1">A head-to-tail association, of the N-terminal and C-terminal halves results in a closed conformation (inactive form) which is incapable of actin or membrane-binding.</text>
</comment>
<comment type="subunit">
    <text evidence="2 3 4 5 9">Interacts with PALS1 and NHERF2. Found in a complex with EZR, PODXL and NHERF2. Interacts with MCC, PLEKHG6, PODXL, SCYL3/PACE1, NHERF1 and TMEM8B. Interacts (when phosphorylated) with FES/FPS. Interacts with dimeric S100P, the interaction may be activating through unmasking of F-actin binding sites. Identified in complexes that contain VIM, EZR, AHNAK, BFSP1, BFSP2, ANK2, PLEC, PRX and spectrin (By similarity). Detected in a complex composed of at least EZR, AHNAK, PPL and PRX (PubMed:14625392). Interacts with PDPN (via cytoplasmic domain); activates RHOA and promotes epithelial-mesenchymal transition. Interacts with SPN/CD43 cytoplasmic tail, CD44 and ICAM2 (By similarity). Interacts with SLC9A3; interaction targets SLC9A3 to the apical membrane (By similarity). Interacts with SLC9A1; regulates interactions of SLC9A1 with cytoskeletal and promotes stress fiber formation (By similarity). Interacts with CLIC5; may work together in a complex which also includes RDX and MYO6 to stabilize linkages between the plasma membrane and subjacent actin cytoskeleton at the base of stereocilia (By similarity).</text>
</comment>
<comment type="subcellular location">
    <subcellularLocation>
        <location evidence="2">Apical cell membrane</location>
        <topology evidence="2">Peripheral membrane protein</topology>
        <orientation evidence="2">Cytoplasmic side</orientation>
    </subcellularLocation>
    <subcellularLocation>
        <location evidence="2">Cell projection</location>
    </subcellularLocation>
    <subcellularLocation>
        <location evidence="2">Cell projection</location>
        <location evidence="2">Microvillus membrane</location>
        <topology evidence="2">Peripheral membrane protein</topology>
        <orientation evidence="2">Cytoplasmic side</orientation>
    </subcellularLocation>
    <subcellularLocation>
        <location evidence="2">Cell projection</location>
        <location evidence="2">Ruffle membrane</location>
        <topology evidence="2">Peripheral membrane protein</topology>
        <orientation evidence="2">Cytoplasmic side</orientation>
    </subcellularLocation>
    <subcellularLocation>
        <location evidence="2">Cytoplasm</location>
        <location evidence="2">Cell cortex</location>
    </subcellularLocation>
    <subcellularLocation>
        <location evidence="11">Cytoplasm</location>
        <location evidence="11">Cytoskeleton</location>
    </subcellularLocation>
    <subcellularLocation>
        <location evidence="3">Cell projection</location>
        <location evidence="3">Microvillus</location>
    </subcellularLocation>
    <text evidence="2 4">Localization to the apical membrane of parietal cells depends on the interaction with PALS1. Microvillar peripheral membrane protein (cytoplasmic side). Localizes to cell extensions and peripheral processes of astrocytes (By similarity).</text>
</comment>
<comment type="tissue specificity">
    <text evidence="9">Detected in eye lens fiber cells (at protein level).</text>
</comment>
<comment type="domain">
    <text evidence="2">Has three main structural domains: an N-terminal FERM domain, a central alpha-helical domain and a C-terminal actin-binding domain.</text>
</comment>
<comment type="domain">
    <text evidence="2">The FERM domain is organized in a clover-shaped structure that comprises three subdomains identified as F1 (residues 2-82), F2 (residues 96-198), and F3 (residues 204-296). In the active form, the subdomain F3 adopts two mutually exclusive conformational isomers where a row of four phenylalanine side chains (Phe250, Phe255, Phe267 and Phe269) must point in the same direction. In the autoinhibited form, the F3 subdomain interacts with the C-terminal domain (residues 516-581) and stabilizes the structure, selecting only one possible arrangement of phenylalanine side chains. The FERM domain mediates binding to membrane lipids and signaling molecules.</text>
</comment>
<comment type="domain">
    <text evidence="2">The central alpha-helical domain is composed of two alpha helices (residues 326-406 and 417-466) connected by a linker. It protrudes from the FERM domain forming a coiled coil structure where the linker can have either a loop or a helix conformation. The monomer is predicted to form an intra-molecular helix-loop-helix coiled coil structure. Whereas the dimer adopts an elongated dumbbell-shaped configuration where continuous alpha helices from each protomer are organized in a antiparallel coiled coil structure that connect FERM:C-terminal domain swapped complex at each end. The dimer is predicted to link actin filaments parallel to the plasma membrane.</text>
</comment>
<comment type="domain">
    <text evidence="2">The [IL]-x-C-x-x-[DE] motif is a proposed target motif for cysteine S-nitrosylation mediated by the iNOS-S100A8/A9 transnitrosylase complex.</text>
</comment>
<comment type="PTM">
    <text evidence="1">Phosphorylated by tyrosine-protein kinases. Phosphorylation by ROCK2 suppresses the head-to-tail association of the N-terminal and C-terminal halves resulting in an opened conformation which is capable of actin and membrane-binding (By similarity).</text>
</comment>
<comment type="PTM">
    <text evidence="2">S-nitrosylation is induced by interferon-gamma and oxidatively-modified low-densitity lipoprotein (LDL(ox)) possibly implicating the iNOS-S100A8/9 transnitrosylase complex.</text>
</comment>
<organism>
    <name type="scientific">Bos taurus</name>
    <name type="common">Bovine</name>
    <dbReference type="NCBI Taxonomy" id="9913"/>
    <lineage>
        <taxon>Eukaryota</taxon>
        <taxon>Metazoa</taxon>
        <taxon>Chordata</taxon>
        <taxon>Craniata</taxon>
        <taxon>Vertebrata</taxon>
        <taxon>Euteleostomi</taxon>
        <taxon>Mammalia</taxon>
        <taxon>Eutheria</taxon>
        <taxon>Laurasiatheria</taxon>
        <taxon>Artiodactyla</taxon>
        <taxon>Ruminantia</taxon>
        <taxon>Pecora</taxon>
        <taxon>Bovidae</taxon>
        <taxon>Bovinae</taxon>
        <taxon>Bos</taxon>
    </lineage>
</organism>
<sequence length="581" mass="68760">MPKPINVRVTTMDAELEFAIQPNTTGKQLFDQVVKTIGLREVWYFGLQYVDNKGFPTWLKLDKKVSAQEVRKESPLQFKFRAKFYPEDVAEELIQDITQKLFFLQVKEGILSDEIYCPPETAVLLGSYAVQAKFGDYNKELHKAGYLGSERLIPQRVMDQHKLTRDQWEDRIQVWHAEHRGMLKDSAMLEYLKIAQDLEMYGINYFEIKNKKGTDLWLGVDALGLNIYEKDDKLTPKIGFPWSEIRNISFNDKKFVIKPIDKKAPDFVFYAPRLRINKRILQLCMGNHELYMRRRKPDTIEVQQMKAQAREEKHQKQLERQQLETEKKRRETVEREKEQMMREKEELMLRLQDYEEKTRKAEKELSDQIQRALKLEEERKRAQEEAGRLEADRLAALRAKEELERQAADQIKSQEQLATELAEYTAKIALLEEARRRKENEVEEWQLRAKEAQDDLVKTREELHLVMTAPPPPPVYEPVNYHVHEGPQEEGTELSAELSSEGILDDRNEEKRITEAEKNERVQRQLMTLTSELSQARDENKRTHNDIIHNENMRQGRDKYKTLRQIRQGNTKQRIDEFEAM</sequence>
<reference key="1">
    <citation type="journal article" date="1993" name="Mol. Cell. Neurosci.">
        <title>Ezrin and osteonectin, two proteins associated with cell shape and growth, are enriched in the locus coeruleus.</title>
        <authorList>
            <person name="Bergson C.M."/>
            <person name="Zhao H."/>
            <person name="Saijoh K."/>
            <person name="Duman R.S."/>
            <person name="Nestler E.J."/>
        </authorList>
    </citation>
    <scope>NUCLEOTIDE SEQUENCE [MRNA]</scope>
    <source>
        <tissue>Brain</tissue>
    </source>
</reference>
<reference key="2">
    <citation type="submission" date="2005-08" db="EMBL/GenBank/DDBJ databases">
        <authorList>
            <consortium name="NIH - Mammalian Gene Collection (MGC) project"/>
        </authorList>
    </citation>
    <scope>NUCLEOTIDE SEQUENCE [LARGE SCALE MRNA]</scope>
    <source>
        <strain>Crossbred X Angus</strain>
        <tissue>Ileum</tissue>
    </source>
</reference>
<reference key="3">
    <citation type="journal article" date="1996" name="Arch. Biochem. Biophys.">
        <title>Proteins and their amino acid compositions: uniqueness, variability, and applications.</title>
        <authorList>
            <person name="Galat A."/>
            <person name="Gerbod M.C."/>
            <person name="Bouet F."/>
            <person name="Riviere S."/>
        </authorList>
    </citation>
    <scope>PROTEIN SEQUENCE OF 2-16 AND 127-141</scope>
    <source>
        <tissue>Kidney</tissue>
    </source>
</reference>
<reference key="4">
    <citation type="journal article" date="2003" name="J. Cell Sci.">
        <title>A novel cell-cell junction system: the cortex adhaerens mosaic of lens fiber cells.</title>
        <authorList>
            <person name="Straub B.K."/>
            <person name="Boda J."/>
            <person name="Kuhn C."/>
            <person name="Schnoelzer M."/>
            <person name="Korf U."/>
            <person name="Kempf T."/>
            <person name="Spring H."/>
            <person name="Hatzfeld M."/>
            <person name="Franke W.W."/>
        </authorList>
    </citation>
    <scope>IDENTIFICATION IN A COMPLEX WITH PRX; AHNAK AND PPL</scope>
    <scope>SUBCELLULAR LOCATION</scope>
    <scope>TISSUE SPECIFICITY</scope>
</reference>
<name>EZRI_BOVIN</name>
<feature type="initiator methionine" description="Removed" evidence="10">
    <location>
        <position position="1"/>
    </location>
</feature>
<feature type="chain" id="PRO_0000219407" description="Ezrin">
    <location>
        <begin position="2"/>
        <end position="581"/>
    </location>
</feature>
<feature type="domain" description="FERM" evidence="7">
    <location>
        <begin position="2"/>
        <end position="295"/>
    </location>
</feature>
<feature type="region of interest" description="Interaction with SCYL3" evidence="1">
    <location>
        <begin position="244"/>
        <end position="581"/>
    </location>
</feature>
<feature type="region of interest" description="Disordered" evidence="8">
    <location>
        <begin position="306"/>
        <end position="341"/>
    </location>
</feature>
<feature type="region of interest" description="Disordered" evidence="8">
    <location>
        <begin position="534"/>
        <end position="560"/>
    </location>
</feature>
<feature type="coiled-coil region" evidence="6">
    <location>
        <begin position="302"/>
        <end position="462"/>
    </location>
</feature>
<feature type="short sequence motif" description="[IL]-x-C-x-x-[DE] motif" evidence="2">
    <location>
        <begin position="115"/>
        <end position="120"/>
    </location>
</feature>
<feature type="compositionally biased region" description="Basic and acidic residues" evidence="8">
    <location>
        <begin position="308"/>
        <end position="341"/>
    </location>
</feature>
<feature type="compositionally biased region" description="Basic and acidic residues" evidence="8">
    <location>
        <begin position="535"/>
        <end position="560"/>
    </location>
</feature>
<feature type="modified residue" description="N6-acetyllysine" evidence="2">
    <location>
        <position position="60"/>
    </location>
</feature>
<feature type="modified residue" description="Phosphotyrosine; by PDGFR" evidence="2">
    <location>
        <position position="146"/>
    </location>
</feature>
<feature type="modified residue" description="Phosphotyrosine; by PDGFR" evidence="2">
    <location>
        <position position="354"/>
    </location>
</feature>
<feature type="modified residue" description="Phosphoserine" evidence="2">
    <location>
        <position position="366"/>
    </location>
</feature>
<feature type="modified residue" description="Phosphotyrosine" evidence="2">
    <location>
        <position position="476"/>
    </location>
</feature>
<feature type="modified residue" description="Phosphothreonine; by ROCK2 and PKC/PRKCI" evidence="2">
    <location>
        <position position="562"/>
    </location>
</feature>
<accession>P31976</accession>
<accession>Q3ZCB9</accession>
<dbReference type="EMBL" id="M98498">
    <property type="protein sequence ID" value="AAA30510.1"/>
    <property type="molecule type" value="mRNA"/>
</dbReference>
<dbReference type="EMBL" id="BC102573">
    <property type="protein sequence ID" value="AAI02574.1"/>
    <property type="molecule type" value="mRNA"/>
</dbReference>
<dbReference type="PIR" id="I45889">
    <property type="entry name" value="I45889"/>
</dbReference>
<dbReference type="RefSeq" id="NP_776642.1">
    <property type="nucleotide sequence ID" value="NM_174217.2"/>
</dbReference>
<dbReference type="RefSeq" id="XP_010799028.1">
    <property type="nucleotide sequence ID" value="XM_010800726.4"/>
</dbReference>
<dbReference type="BMRB" id="P31976"/>
<dbReference type="SMR" id="P31976"/>
<dbReference type="CORUM" id="P31976"/>
<dbReference type="FunCoup" id="P31976">
    <property type="interactions" value="2178"/>
</dbReference>
<dbReference type="STRING" id="9913.ENSBTAP00000059239"/>
<dbReference type="PaxDb" id="9913-ENSBTAP00000013663"/>
<dbReference type="PeptideAtlas" id="P31976"/>
<dbReference type="Ensembl" id="ENSBTAT00000013663.5">
    <property type="protein sequence ID" value="ENSBTAP00000013663.4"/>
    <property type="gene ID" value="ENSBTAG00000010347.6"/>
</dbReference>
<dbReference type="GeneID" id="281574"/>
<dbReference type="KEGG" id="bta:281574"/>
<dbReference type="CTD" id="7430"/>
<dbReference type="VEuPathDB" id="HostDB:ENSBTAG00000010347"/>
<dbReference type="VGNC" id="VGNC:28676">
    <property type="gene designation" value="EZR"/>
</dbReference>
<dbReference type="eggNOG" id="KOG3529">
    <property type="taxonomic scope" value="Eukaryota"/>
</dbReference>
<dbReference type="GeneTree" id="ENSGT01090000260082"/>
<dbReference type="HOGENOM" id="CLU_003623_6_2_1"/>
<dbReference type="InParanoid" id="P31976"/>
<dbReference type="OrthoDB" id="6018897at2759"/>
<dbReference type="TreeFam" id="TF313935"/>
<dbReference type="Reactome" id="R-BTA-373752">
    <property type="pathway name" value="Netrin-1 signaling"/>
</dbReference>
<dbReference type="Proteomes" id="UP000009136">
    <property type="component" value="Chromosome 9"/>
</dbReference>
<dbReference type="Bgee" id="ENSBTAG00000010347">
    <property type="expression patterns" value="Expressed in oocyte and 105 other cell types or tissues"/>
</dbReference>
<dbReference type="GO" id="GO:0015629">
    <property type="term" value="C:actin cytoskeleton"/>
    <property type="evidence" value="ECO:0000250"/>
    <property type="project" value="UniProtKB"/>
</dbReference>
<dbReference type="GO" id="GO:0005884">
    <property type="term" value="C:actin filament"/>
    <property type="evidence" value="ECO:0000250"/>
    <property type="project" value="UniProtKB"/>
</dbReference>
<dbReference type="GO" id="GO:0005912">
    <property type="term" value="C:adherens junction"/>
    <property type="evidence" value="ECO:0000318"/>
    <property type="project" value="GO_Central"/>
</dbReference>
<dbReference type="GO" id="GO:0045177">
    <property type="term" value="C:apical part of cell"/>
    <property type="evidence" value="ECO:0000250"/>
    <property type="project" value="AgBase"/>
</dbReference>
<dbReference type="GO" id="GO:0016324">
    <property type="term" value="C:apical plasma membrane"/>
    <property type="evidence" value="ECO:0000250"/>
    <property type="project" value="AgBase"/>
</dbReference>
<dbReference type="GO" id="GO:0016323">
    <property type="term" value="C:basolateral plasma membrane"/>
    <property type="evidence" value="ECO:0000250"/>
    <property type="project" value="UniProtKB"/>
</dbReference>
<dbReference type="GO" id="GO:0005938">
    <property type="term" value="C:cell cortex"/>
    <property type="evidence" value="ECO:0007669"/>
    <property type="project" value="UniProtKB-SubCell"/>
</dbReference>
<dbReference type="GO" id="GO:0036064">
    <property type="term" value="C:ciliary basal body"/>
    <property type="evidence" value="ECO:0000250"/>
    <property type="project" value="AgBase"/>
</dbReference>
<dbReference type="GO" id="GO:0030175">
    <property type="term" value="C:filopodium"/>
    <property type="evidence" value="ECO:0000318"/>
    <property type="project" value="GO_Central"/>
</dbReference>
<dbReference type="GO" id="GO:0005902">
    <property type="term" value="C:microvillus"/>
    <property type="evidence" value="ECO:0000250"/>
    <property type="project" value="UniProtKB"/>
</dbReference>
<dbReference type="GO" id="GO:0031528">
    <property type="term" value="C:microvillus membrane"/>
    <property type="evidence" value="ECO:0000250"/>
    <property type="project" value="UniProtKB"/>
</dbReference>
<dbReference type="GO" id="GO:0005886">
    <property type="term" value="C:plasma membrane"/>
    <property type="evidence" value="ECO:0000250"/>
    <property type="project" value="UniProtKB"/>
</dbReference>
<dbReference type="GO" id="GO:0032587">
    <property type="term" value="C:ruffle membrane"/>
    <property type="evidence" value="ECO:0007669"/>
    <property type="project" value="UniProtKB-SubCell"/>
</dbReference>
<dbReference type="GO" id="GO:0001931">
    <property type="term" value="C:uropod"/>
    <property type="evidence" value="ECO:0000250"/>
    <property type="project" value="AgBase"/>
</dbReference>
<dbReference type="GO" id="GO:0003779">
    <property type="term" value="F:actin binding"/>
    <property type="evidence" value="ECO:0000318"/>
    <property type="project" value="GO_Central"/>
</dbReference>
<dbReference type="GO" id="GO:0051015">
    <property type="term" value="F:actin filament binding"/>
    <property type="evidence" value="ECO:0000250"/>
    <property type="project" value="UniProtKB"/>
</dbReference>
<dbReference type="GO" id="GO:0050839">
    <property type="term" value="F:cell adhesion molecule binding"/>
    <property type="evidence" value="ECO:0000250"/>
    <property type="project" value="UniProtKB"/>
</dbReference>
<dbReference type="GO" id="GO:0051017">
    <property type="term" value="P:actin filament bundle assembly"/>
    <property type="evidence" value="ECO:0000250"/>
    <property type="project" value="UniProtKB"/>
</dbReference>
<dbReference type="GO" id="GO:0035088">
    <property type="term" value="P:establishment or maintenance of apical/basal cell polarity"/>
    <property type="evidence" value="ECO:0000250"/>
    <property type="project" value="AgBase"/>
</dbReference>
<dbReference type="GO" id="GO:2000643">
    <property type="term" value="P:positive regulation of early endosome to late endosome transport"/>
    <property type="evidence" value="ECO:0000318"/>
    <property type="project" value="GO_Central"/>
</dbReference>
<dbReference type="GO" id="GO:1902966">
    <property type="term" value="P:positive regulation of protein localization to early endosome"/>
    <property type="evidence" value="ECO:0000318"/>
    <property type="project" value="GO_Central"/>
</dbReference>
<dbReference type="GO" id="GO:0008360">
    <property type="term" value="P:regulation of cell shape"/>
    <property type="evidence" value="ECO:0000318"/>
    <property type="project" value="GO_Central"/>
</dbReference>
<dbReference type="GO" id="GO:1902115">
    <property type="term" value="P:regulation of organelle assembly"/>
    <property type="evidence" value="ECO:0000318"/>
    <property type="project" value="GO_Central"/>
</dbReference>
<dbReference type="CDD" id="cd14473">
    <property type="entry name" value="FERM_B-lobe"/>
    <property type="match status" value="1"/>
</dbReference>
<dbReference type="CDD" id="cd13194">
    <property type="entry name" value="FERM_C_ERM"/>
    <property type="match status" value="1"/>
</dbReference>
<dbReference type="CDD" id="cd17187">
    <property type="entry name" value="FERM_F1_ERM"/>
    <property type="match status" value="1"/>
</dbReference>
<dbReference type="FunFam" id="2.30.29.30:FF:000003">
    <property type="entry name" value="Radixin isoform 1"/>
    <property type="match status" value="1"/>
</dbReference>
<dbReference type="FunFam" id="1.20.80.10:FF:000002">
    <property type="entry name" value="radixin isoform X1"/>
    <property type="match status" value="1"/>
</dbReference>
<dbReference type="FunFam" id="3.10.20.90:FF:000013">
    <property type="entry name" value="radixin isoform X1"/>
    <property type="match status" value="1"/>
</dbReference>
<dbReference type="FunFam" id="1.20.5.450:FF:000001">
    <property type="entry name" value="radixin isoform X2"/>
    <property type="match status" value="1"/>
</dbReference>
<dbReference type="Gene3D" id="1.20.5.450">
    <property type="match status" value="1"/>
</dbReference>
<dbReference type="Gene3D" id="1.20.80.10">
    <property type="match status" value="1"/>
</dbReference>
<dbReference type="Gene3D" id="6.10.360.10">
    <property type="match status" value="1"/>
</dbReference>
<dbReference type="Gene3D" id="3.10.20.90">
    <property type="entry name" value="Phosphatidylinositol 3-kinase Catalytic Subunit, Chain A, domain 1"/>
    <property type="match status" value="1"/>
</dbReference>
<dbReference type="Gene3D" id="2.30.29.30">
    <property type="entry name" value="Pleckstrin-homology domain (PH domain)/Phosphotyrosine-binding domain (PTB)"/>
    <property type="match status" value="1"/>
</dbReference>
<dbReference type="InterPro" id="IPR019749">
    <property type="entry name" value="Band_41_domain"/>
</dbReference>
<dbReference type="InterPro" id="IPR011174">
    <property type="entry name" value="ERM"/>
</dbReference>
<dbReference type="InterPro" id="IPR011259">
    <property type="entry name" value="ERM_C_dom"/>
</dbReference>
<dbReference type="InterPro" id="IPR041789">
    <property type="entry name" value="ERM_FERM_C"/>
</dbReference>
<dbReference type="InterPro" id="IPR046810">
    <property type="entry name" value="ERM_helical"/>
</dbReference>
<dbReference type="InterPro" id="IPR000798">
    <property type="entry name" value="Ez/rad/moesin-like"/>
</dbReference>
<dbReference type="InterPro" id="IPR014352">
    <property type="entry name" value="FERM/acyl-CoA-bd_prot_sf"/>
</dbReference>
<dbReference type="InterPro" id="IPR035963">
    <property type="entry name" value="FERM_2"/>
</dbReference>
<dbReference type="InterPro" id="IPR019748">
    <property type="entry name" value="FERM_central"/>
</dbReference>
<dbReference type="InterPro" id="IPR019747">
    <property type="entry name" value="FERM_CS"/>
</dbReference>
<dbReference type="InterPro" id="IPR000299">
    <property type="entry name" value="FERM_domain"/>
</dbReference>
<dbReference type="InterPro" id="IPR018979">
    <property type="entry name" value="FERM_N"/>
</dbReference>
<dbReference type="InterPro" id="IPR018980">
    <property type="entry name" value="FERM_PH-like_C"/>
</dbReference>
<dbReference type="InterPro" id="IPR008954">
    <property type="entry name" value="Moesin_tail_sf"/>
</dbReference>
<dbReference type="InterPro" id="IPR011993">
    <property type="entry name" value="PH-like_dom_sf"/>
</dbReference>
<dbReference type="InterPro" id="IPR029071">
    <property type="entry name" value="Ubiquitin-like_domsf"/>
</dbReference>
<dbReference type="PANTHER" id="PTHR23281">
    <property type="entry name" value="MERLIN/MOESIN/EZRIN/RADIXIN"/>
    <property type="match status" value="1"/>
</dbReference>
<dbReference type="Pfam" id="PF00769">
    <property type="entry name" value="ERM_C"/>
    <property type="match status" value="1"/>
</dbReference>
<dbReference type="Pfam" id="PF20492">
    <property type="entry name" value="ERM_helical"/>
    <property type="match status" value="1"/>
</dbReference>
<dbReference type="Pfam" id="PF09380">
    <property type="entry name" value="FERM_C"/>
    <property type="match status" value="1"/>
</dbReference>
<dbReference type="Pfam" id="PF00373">
    <property type="entry name" value="FERM_M"/>
    <property type="match status" value="1"/>
</dbReference>
<dbReference type="Pfam" id="PF09379">
    <property type="entry name" value="FERM_N"/>
    <property type="match status" value="1"/>
</dbReference>
<dbReference type="PIRSF" id="PIRSF002305">
    <property type="entry name" value="ERM"/>
    <property type="match status" value="1"/>
</dbReference>
<dbReference type="PRINTS" id="PR00935">
    <property type="entry name" value="BAND41"/>
</dbReference>
<dbReference type="PRINTS" id="PR00661">
    <property type="entry name" value="ERMFAMILY"/>
</dbReference>
<dbReference type="SMART" id="SM00295">
    <property type="entry name" value="B41"/>
    <property type="match status" value="1"/>
</dbReference>
<dbReference type="SMART" id="SM01196">
    <property type="entry name" value="FERM_C"/>
    <property type="match status" value="1"/>
</dbReference>
<dbReference type="SUPFAM" id="SSF48678">
    <property type="entry name" value="Moesin tail domain"/>
    <property type="match status" value="1"/>
</dbReference>
<dbReference type="SUPFAM" id="SSF50729">
    <property type="entry name" value="PH domain-like"/>
    <property type="match status" value="1"/>
</dbReference>
<dbReference type="SUPFAM" id="SSF47031">
    <property type="entry name" value="Second domain of FERM"/>
    <property type="match status" value="1"/>
</dbReference>
<dbReference type="SUPFAM" id="SSF54236">
    <property type="entry name" value="Ubiquitin-like"/>
    <property type="match status" value="1"/>
</dbReference>
<dbReference type="PROSITE" id="PS00660">
    <property type="entry name" value="FERM_1"/>
    <property type="match status" value="1"/>
</dbReference>
<dbReference type="PROSITE" id="PS00661">
    <property type="entry name" value="FERM_2"/>
    <property type="match status" value="1"/>
</dbReference>
<dbReference type="PROSITE" id="PS50057">
    <property type="entry name" value="FERM_3"/>
    <property type="match status" value="1"/>
</dbReference>
<protein>
    <recommendedName>
        <fullName>Ezrin</fullName>
    </recommendedName>
    <alternativeName>
        <fullName>Cytovillin</fullName>
    </alternativeName>
    <alternativeName>
        <fullName>Villin-2</fullName>
    </alternativeName>
    <alternativeName>
        <fullName>p81</fullName>
    </alternativeName>
</protein>
<evidence type="ECO:0000250" key="1"/>
<evidence type="ECO:0000250" key="2">
    <source>
        <dbReference type="UniProtKB" id="P15311"/>
    </source>
</evidence>
<evidence type="ECO:0000250" key="3">
    <source>
        <dbReference type="UniProtKB" id="P26040"/>
    </source>
</evidence>
<evidence type="ECO:0000250" key="4">
    <source>
        <dbReference type="UniProtKB" id="P31977"/>
    </source>
</evidence>
<evidence type="ECO:0000250" key="5">
    <source>
        <dbReference type="UniProtKB" id="Q8HZQ5"/>
    </source>
</evidence>
<evidence type="ECO:0000255" key="6"/>
<evidence type="ECO:0000255" key="7">
    <source>
        <dbReference type="PROSITE-ProRule" id="PRU00084"/>
    </source>
</evidence>
<evidence type="ECO:0000256" key="8">
    <source>
        <dbReference type="SAM" id="MobiDB-lite"/>
    </source>
</evidence>
<evidence type="ECO:0000269" key="9">
    <source>
    </source>
</evidence>
<evidence type="ECO:0000269" key="10">
    <source>
    </source>
</evidence>
<evidence type="ECO:0000305" key="11">
    <source>
    </source>
</evidence>